<gene>
    <name type="ordered locus">BBR47_54150</name>
</gene>
<evidence type="ECO:0000269" key="1">
    <source>
    </source>
</evidence>
<keyword id="KW-0134">Cell wall</keyword>
<keyword id="KW-0903">Direct protein sequencing</keyword>
<keyword id="KW-1185">Reference proteome</keyword>
<keyword id="KW-0701">S-layer</keyword>
<keyword id="KW-0964">Secreted</keyword>
<keyword id="KW-0732">Signal</keyword>
<name>SLAPO_BREBN</name>
<sequence>MNKKVVLSVLSTTLVASVAASAFAAPKDGIYIGGNIKKYYSTDVLFEMTPQAKATYASELNAMASDFNNVVFVDYKGKGASIEELFTKGSKVALGEPLKKEDFADLYKVVNKDGSSTATEDARAKVDPTPTGDLNVESVSANNLKEVVVTFDKAVDADTAGDKAYYTFTANKLAVDKVTVSGKTVVLTLAAKAENQASYELNVDGIKGLVKTTKEVKFFDNTTPTVAAVAAIGPKQVKVTFSEPLSAKPSFSVNNGAIAVVADNFVEGTKEVILTLGAQPTASTNTVTVEGGADYASYKVEKVTKDFTVVADTTPPTVSVKKASAKQVVLEFSEDVQNVQDKNVVFYHTTKGHEGYKGTILGVDGKEVTISFVNPLPEGQFKIFVDYVVDNGTQISDLWGNKLPEQVITGTFAADTTPPTVTKVEAKTNTEIHVTFSETVNGADNKANFTLKGVTGNVIPLTKAEVVDAAKNIYKVVTTEPLNGGSYYLTVKGIEDASKNKLVEYTATVAVADTVPPNVKDLDPATPGTDAQLISPTKVKIAFTEPMDKASIENKNNYMFNGFNLDSKVTLTATDSNTAVVVDFTNVVGFNGFKNGDAISVGRVLDTAGNPKTEMQTKVNLPNSVSAPLFDKAEVTGKNTVKLYFKELIINAKADDFAVDNGEGYKAVNSISNDVVENKSVITLTTGNDLPTTAAGVKVKTVGEVDAKNQYGVAVALTDVPADDKIGPNWLKAETVDTNNNGKIDQFKLTFSEALYVASVQDSDFRIEGYTIAGVETKGEVVTIKVTELDIDDSDATPTVAVIGSVEDLKRNASGPFEPQKAIDGVSAPDKEAPVVTGVEAGKTYNTAVTPDSADKDIKTVVLKKDGKELAGYALKTPISENGSYELVVTDNAGNTTTVKFKVDIPAEDKKAPEIKTVTDDKVAVADAPKWEAPKATATDDVDGDISDKIAVTYSSEDAGSKVTDLASAQTHLGTAGNTVKVTYNVTDKAGNPATAVSATFTAI</sequence>
<reference key="1">
    <citation type="journal article" date="1986" name="J. Bacteriol.">
        <title>Characterization of the genes coding for two major cell wall proteins from protein-producing Bacillus brevis 47: complete nucleotide sequence of the outer wall protein gene.</title>
        <authorList>
            <person name="Tsuboi A."/>
            <person name="Uchihi R."/>
            <person name="Tabata R."/>
            <person name="Takahashi Y."/>
            <person name="Hashiba H."/>
            <person name="Sasaki T."/>
            <person name="Yamagata H."/>
            <person name="Tsukagoshi N."/>
            <person name="Udaka S."/>
        </authorList>
    </citation>
    <scope>NUCLEOTIDE SEQUENCE [GENOMIC DNA]</scope>
    <scope>PROTEIN SEQUENCE OF N-TERMINUS</scope>
</reference>
<reference key="2">
    <citation type="submission" date="2005-03" db="EMBL/GenBank/DDBJ databases">
        <title>Brevibacillus brevis strain 47, complete genome.</title>
        <authorList>
            <person name="Hosoyama A."/>
            <person name="Yamada R."/>
            <person name="Hongo Y."/>
            <person name="Terui Y."/>
            <person name="Ankai A."/>
            <person name="Masuyama W."/>
            <person name="Sekiguchi M."/>
            <person name="Takeda T."/>
            <person name="Asano K."/>
            <person name="Ohji S."/>
            <person name="Ichikawa N."/>
            <person name="Narita S."/>
            <person name="Aoki N."/>
            <person name="Miura H."/>
            <person name="Matsushita S."/>
            <person name="Sekigawa T."/>
            <person name="Yamagata H."/>
            <person name="Yoshikawa H."/>
            <person name="Udaka S."/>
            <person name="Tanikawa S."/>
            <person name="Fujita N."/>
        </authorList>
    </citation>
    <scope>NUCLEOTIDE SEQUENCE [LARGE SCALE GENOMIC DNA]</scope>
    <source>
        <strain>47 / JCM 6285 / NBRC 100599</strain>
    </source>
</reference>
<reference key="3">
    <citation type="journal article" date="1988" name="J. Bacteriol.">
        <title>Characterization of the genes for the hexagonally arranged surface layer proteins in protein-producing Bacillus brevis 47: complete nucleotide sequence of the middle wall protein gene.</title>
        <authorList>
            <person name="Tsuboi A."/>
            <person name="Uchihi R."/>
            <person name="Adachi T."/>
            <person name="Sasaki T."/>
            <person name="Hayakawa S."/>
            <person name="Yamagata H."/>
            <person name="Tsukagoshi N."/>
            <person name="Udaka S."/>
        </authorList>
    </citation>
    <scope>NUCLEOTIDE SEQUENCE [GENOMIC DNA] OF 1-85</scope>
</reference>
<proteinExistence type="evidence at protein level"/>
<feature type="signal peptide" evidence="1">
    <location>
        <begin position="1"/>
        <end position="24"/>
    </location>
</feature>
<feature type="chain" id="PRO_0000032643" description="Outer cell wall protein">
    <location>
        <begin position="25"/>
        <end position="1004"/>
    </location>
</feature>
<comment type="function">
    <text>The outer wall protein binds to the middle cell wall protein.</text>
</comment>
<comment type="subunit">
    <text>The outer cell wall layer is composed of subunits of the outer cell wall protein. These proteins form a hexagonal array with a lattice constant of 14.5 nm in the outer cell wall layers.</text>
</comment>
<comment type="subcellular location">
    <subcellularLocation>
        <location>Secreted</location>
        <location>Cell wall</location>
        <location>S-layer</location>
    </subcellularLocation>
    <text>This bacterium is covered by a S-layer with hexagonal symmetry.</text>
</comment>
<protein>
    <recommendedName>
        <fullName>Outer cell wall protein</fullName>
        <shortName>OWP</shortName>
    </recommendedName>
</protein>
<accession>P09333</accession>
<accession>C0Z743</accession>
<organism>
    <name type="scientific">Brevibacillus brevis (strain 47 / JCM 6285 / NBRC 100599)</name>
    <dbReference type="NCBI Taxonomy" id="358681"/>
    <lineage>
        <taxon>Bacteria</taxon>
        <taxon>Bacillati</taxon>
        <taxon>Bacillota</taxon>
        <taxon>Bacilli</taxon>
        <taxon>Bacillales</taxon>
        <taxon>Paenibacillaceae</taxon>
        <taxon>Brevibacillus</taxon>
    </lineage>
</organism>
<dbReference type="EMBL" id="M14238">
    <property type="protein sequence ID" value="AAA22373.1"/>
    <property type="molecule type" value="Genomic_DNA"/>
</dbReference>
<dbReference type="EMBL" id="AP008955">
    <property type="protein sequence ID" value="BAH46392.1"/>
    <property type="molecule type" value="Genomic_DNA"/>
</dbReference>
<dbReference type="EMBL" id="M19115">
    <property type="protein sequence ID" value="AAA22761.1"/>
    <property type="molecule type" value="Genomic_DNA"/>
</dbReference>
<dbReference type="PIR" id="B25039">
    <property type="entry name" value="B25039"/>
</dbReference>
<dbReference type="RefSeq" id="WP_015893588.1">
    <property type="nucleotide sequence ID" value="NC_012491.1"/>
</dbReference>
<dbReference type="SMR" id="P09333"/>
<dbReference type="STRING" id="358681.BBR47_54150"/>
<dbReference type="KEGG" id="bbe:BBR47_54150"/>
<dbReference type="eggNOG" id="COG0544">
    <property type="taxonomic scope" value="Bacteria"/>
</dbReference>
<dbReference type="HOGENOM" id="CLU_298927_0_0_9"/>
<dbReference type="Proteomes" id="UP000001877">
    <property type="component" value="Chromosome"/>
</dbReference>
<dbReference type="GO" id="GO:0005576">
    <property type="term" value="C:extracellular region"/>
    <property type="evidence" value="ECO:0007669"/>
    <property type="project" value="UniProtKB-KW"/>
</dbReference>
<dbReference type="GO" id="GO:0030115">
    <property type="term" value="C:S-layer"/>
    <property type="evidence" value="ECO:0007669"/>
    <property type="project" value="UniProtKB-SubCell"/>
</dbReference>
<dbReference type="Gene3D" id="2.60.40.1220">
    <property type="match status" value="5"/>
</dbReference>
<dbReference type="Gene3D" id="2.60.40.10">
    <property type="entry name" value="Immunoglobulins"/>
    <property type="match status" value="1"/>
</dbReference>
<dbReference type="InterPro" id="IPR014755">
    <property type="entry name" value="Cu-Rt/internalin_Ig-like"/>
</dbReference>
<dbReference type="InterPro" id="IPR013783">
    <property type="entry name" value="Ig-like_fold"/>
</dbReference>